<comment type="function">
    <text evidence="1">One of the primary rRNA binding proteins, it binds directly near the 3'-end of the 23S rRNA, where it nucleates assembly of the 50S subunit.</text>
</comment>
<comment type="subunit">
    <text evidence="1">Part of the 50S ribosomal subunit. Forms a cluster with proteins L14 and L19.</text>
</comment>
<comment type="similarity">
    <text evidence="1">Belongs to the universal ribosomal protein uL3 family.</text>
</comment>
<proteinExistence type="inferred from homology"/>
<feature type="chain" id="PRO_1000067566" description="Large ribosomal subunit protein uL3">
    <location>
        <begin position="1"/>
        <end position="223"/>
    </location>
</feature>
<dbReference type="EMBL" id="CP000509">
    <property type="protein sequence ID" value="ABL83403.1"/>
    <property type="molecule type" value="Genomic_DNA"/>
</dbReference>
<dbReference type="RefSeq" id="WP_011757334.1">
    <property type="nucleotide sequence ID" value="NC_008699.1"/>
</dbReference>
<dbReference type="SMR" id="A1SNL8"/>
<dbReference type="STRING" id="196162.Noca_3905"/>
<dbReference type="KEGG" id="nca:Noca_3905"/>
<dbReference type="eggNOG" id="COG0087">
    <property type="taxonomic scope" value="Bacteria"/>
</dbReference>
<dbReference type="HOGENOM" id="CLU_044142_4_1_11"/>
<dbReference type="OrthoDB" id="9806135at2"/>
<dbReference type="Proteomes" id="UP000000640">
    <property type="component" value="Chromosome"/>
</dbReference>
<dbReference type="GO" id="GO:0022625">
    <property type="term" value="C:cytosolic large ribosomal subunit"/>
    <property type="evidence" value="ECO:0007669"/>
    <property type="project" value="TreeGrafter"/>
</dbReference>
<dbReference type="GO" id="GO:0019843">
    <property type="term" value="F:rRNA binding"/>
    <property type="evidence" value="ECO:0007669"/>
    <property type="project" value="UniProtKB-UniRule"/>
</dbReference>
<dbReference type="GO" id="GO:0003735">
    <property type="term" value="F:structural constituent of ribosome"/>
    <property type="evidence" value="ECO:0007669"/>
    <property type="project" value="InterPro"/>
</dbReference>
<dbReference type="GO" id="GO:0006412">
    <property type="term" value="P:translation"/>
    <property type="evidence" value="ECO:0007669"/>
    <property type="project" value="UniProtKB-UniRule"/>
</dbReference>
<dbReference type="FunFam" id="2.40.30.10:FF:000004">
    <property type="entry name" value="50S ribosomal protein L3"/>
    <property type="match status" value="1"/>
</dbReference>
<dbReference type="FunFam" id="3.30.160.810:FF:000001">
    <property type="entry name" value="50S ribosomal protein L3"/>
    <property type="match status" value="1"/>
</dbReference>
<dbReference type="Gene3D" id="3.30.160.810">
    <property type="match status" value="1"/>
</dbReference>
<dbReference type="Gene3D" id="2.40.30.10">
    <property type="entry name" value="Translation factors"/>
    <property type="match status" value="1"/>
</dbReference>
<dbReference type="HAMAP" id="MF_01325_B">
    <property type="entry name" value="Ribosomal_uL3_B"/>
    <property type="match status" value="1"/>
</dbReference>
<dbReference type="InterPro" id="IPR000597">
    <property type="entry name" value="Ribosomal_uL3"/>
</dbReference>
<dbReference type="InterPro" id="IPR019927">
    <property type="entry name" value="Ribosomal_uL3_bac/org-type"/>
</dbReference>
<dbReference type="InterPro" id="IPR019926">
    <property type="entry name" value="Ribosomal_uL3_CS"/>
</dbReference>
<dbReference type="InterPro" id="IPR009000">
    <property type="entry name" value="Transl_B-barrel_sf"/>
</dbReference>
<dbReference type="NCBIfam" id="TIGR03625">
    <property type="entry name" value="L3_bact"/>
    <property type="match status" value="1"/>
</dbReference>
<dbReference type="PANTHER" id="PTHR11229">
    <property type="entry name" value="50S RIBOSOMAL PROTEIN L3"/>
    <property type="match status" value="1"/>
</dbReference>
<dbReference type="PANTHER" id="PTHR11229:SF16">
    <property type="entry name" value="LARGE RIBOSOMAL SUBUNIT PROTEIN UL3C"/>
    <property type="match status" value="1"/>
</dbReference>
<dbReference type="Pfam" id="PF00297">
    <property type="entry name" value="Ribosomal_L3"/>
    <property type="match status" value="1"/>
</dbReference>
<dbReference type="SUPFAM" id="SSF50447">
    <property type="entry name" value="Translation proteins"/>
    <property type="match status" value="1"/>
</dbReference>
<dbReference type="PROSITE" id="PS00474">
    <property type="entry name" value="RIBOSOMAL_L3"/>
    <property type="match status" value="1"/>
</dbReference>
<name>RL3_NOCSJ</name>
<sequence>MTIERNMKGLLGTKLGMTQVWDENNRVVPVTVIAAGTNVVTQVRTPATDGYNAIQVGYGEIDGRKVTKPQAGHFGKAGTTPRRHLVEIRTALAADYTVGQELAVDTFAAGEEIDVTGTSKGKGFAGTMKRHGFAGVSASHGAHRNHRKPGSIGACATPGRVFKGVRMAGRMGTDTVTTQNVTVHAVDTAKGLILLKGAVPGPKGGLVVLRSAAKSSLTSGKEV</sequence>
<evidence type="ECO:0000255" key="1">
    <source>
        <dbReference type="HAMAP-Rule" id="MF_01325"/>
    </source>
</evidence>
<evidence type="ECO:0000305" key="2"/>
<gene>
    <name evidence="1" type="primary">rplC</name>
    <name type="ordered locus">Noca_3905</name>
</gene>
<organism>
    <name type="scientific">Nocardioides sp. (strain ATCC BAA-499 / JS614)</name>
    <dbReference type="NCBI Taxonomy" id="196162"/>
    <lineage>
        <taxon>Bacteria</taxon>
        <taxon>Bacillati</taxon>
        <taxon>Actinomycetota</taxon>
        <taxon>Actinomycetes</taxon>
        <taxon>Propionibacteriales</taxon>
        <taxon>Nocardioidaceae</taxon>
        <taxon>Nocardioides</taxon>
    </lineage>
</organism>
<keyword id="KW-1185">Reference proteome</keyword>
<keyword id="KW-0687">Ribonucleoprotein</keyword>
<keyword id="KW-0689">Ribosomal protein</keyword>
<keyword id="KW-0694">RNA-binding</keyword>
<keyword id="KW-0699">rRNA-binding</keyword>
<reference key="1">
    <citation type="submission" date="2006-12" db="EMBL/GenBank/DDBJ databases">
        <title>Complete sequence of chromosome 1 of Nocardioides sp. JS614.</title>
        <authorList>
            <person name="Copeland A."/>
            <person name="Lucas S."/>
            <person name="Lapidus A."/>
            <person name="Barry K."/>
            <person name="Detter J.C."/>
            <person name="Glavina del Rio T."/>
            <person name="Hammon N."/>
            <person name="Israni S."/>
            <person name="Dalin E."/>
            <person name="Tice H."/>
            <person name="Pitluck S."/>
            <person name="Thompson L.S."/>
            <person name="Brettin T."/>
            <person name="Bruce D."/>
            <person name="Han C."/>
            <person name="Tapia R."/>
            <person name="Schmutz J."/>
            <person name="Larimer F."/>
            <person name="Land M."/>
            <person name="Hauser L."/>
            <person name="Kyrpides N."/>
            <person name="Kim E."/>
            <person name="Mattes T."/>
            <person name="Gossett J."/>
            <person name="Richardson P."/>
        </authorList>
    </citation>
    <scope>NUCLEOTIDE SEQUENCE [LARGE SCALE GENOMIC DNA]</scope>
    <source>
        <strain>ATCC BAA-499 / JS614</strain>
    </source>
</reference>
<accession>A1SNL8</accession>
<protein>
    <recommendedName>
        <fullName evidence="1">Large ribosomal subunit protein uL3</fullName>
    </recommendedName>
    <alternativeName>
        <fullName evidence="2">50S ribosomal protein L3</fullName>
    </alternativeName>
</protein>